<gene>
    <name evidence="5" type="primary">oppC</name>
    <name evidence="8" type="ordered locus">Rv1282c</name>
    <name type="ORF">MTCY373.01c</name>
    <name type="ORF">MTCY3H3.01</name>
</gene>
<proteinExistence type="evidence at protein level"/>
<keyword id="KW-0002">3D-structure</keyword>
<keyword id="KW-0997">Cell inner membrane</keyword>
<keyword id="KW-1003">Cell membrane</keyword>
<keyword id="KW-0472">Membrane</keyword>
<keyword id="KW-0571">Peptide transport</keyword>
<keyword id="KW-0653">Protein transport</keyword>
<keyword id="KW-1185">Reference proteome</keyword>
<keyword id="KW-0812">Transmembrane</keyword>
<keyword id="KW-1133">Transmembrane helix</keyword>
<keyword id="KW-0813">Transport</keyword>
<sequence length="291" mass="31374">MTEFASRRTLVVRRFLRNRAAVASLAALLLLFVSAYALPPLLPYSYDDLDFNALLQPPGTKHWLGTNALGQDLLAQTLRGMQKSMLIGVCVAVISTGIAATVGAISGYFGGWRDRTLMWVVDLLLVVPSFILIAIVTPRTKNSANIMFLVLLLAGFGWMISSRMVRGMTMSLREREFIRAARYMGVSSRRIIVGHVVPNVASILIIDAALNVAAAILAETGLSFLGFGIQPPDVSLGTLIADGTASATAFPWVFLFPASILVLILVCANLTGDGLRDALDPASRSLRRGVR</sequence>
<name>OPPC_MYCTU</name>
<protein>
    <recommendedName>
        <fullName evidence="6">Oligopeptide transport system permease protein OppC</fullName>
    </recommendedName>
</protein>
<accession>P9WFZ9</accession>
<accession>L0T965</accession>
<accession>P66964</accession>
<accession>Q10623</accession>
<accession>Q50698</accession>
<organism>
    <name type="scientific">Mycobacterium tuberculosis (strain ATCC 25618 / H37Rv)</name>
    <dbReference type="NCBI Taxonomy" id="83332"/>
    <lineage>
        <taxon>Bacteria</taxon>
        <taxon>Bacillati</taxon>
        <taxon>Actinomycetota</taxon>
        <taxon>Actinomycetes</taxon>
        <taxon>Mycobacteriales</taxon>
        <taxon>Mycobacteriaceae</taxon>
        <taxon>Mycobacterium</taxon>
        <taxon>Mycobacterium tuberculosis complex</taxon>
    </lineage>
</organism>
<evidence type="ECO:0000255" key="1"/>
<evidence type="ECO:0000255" key="2">
    <source>
        <dbReference type="PROSITE-ProRule" id="PRU00441"/>
    </source>
</evidence>
<evidence type="ECO:0000269" key="3">
    <source>
    </source>
</evidence>
<evidence type="ECO:0000269" key="4">
    <source>
    </source>
</evidence>
<evidence type="ECO:0000303" key="5">
    <source>
    </source>
</evidence>
<evidence type="ECO:0000305" key="6"/>
<evidence type="ECO:0000305" key="7">
    <source>
    </source>
</evidence>
<evidence type="ECO:0000312" key="8">
    <source>
        <dbReference type="EMBL" id="CCP44038.1"/>
    </source>
</evidence>
<evidence type="ECO:0007744" key="9">
    <source>
        <dbReference type="PDB" id="8J5Q"/>
    </source>
</evidence>
<evidence type="ECO:0007744" key="10">
    <source>
        <dbReference type="PDB" id="8J5R"/>
    </source>
</evidence>
<evidence type="ECO:0007744" key="11">
    <source>
        <dbReference type="PDB" id="8J5S"/>
    </source>
</evidence>
<evidence type="ECO:0007744" key="12">
    <source>
        <dbReference type="PDB" id="8J5T"/>
    </source>
</evidence>
<evidence type="ECO:0007829" key="13">
    <source>
        <dbReference type="PDB" id="8J5Q"/>
    </source>
</evidence>
<evidence type="ECO:0007829" key="14">
    <source>
        <dbReference type="PDB" id="8J5S"/>
    </source>
</evidence>
<evidence type="ECO:0007829" key="15">
    <source>
        <dbReference type="PDB" id="8J5T"/>
    </source>
</evidence>
<feature type="chain" id="PRO_0000060289" description="Oligopeptide transport system permease protein OppC">
    <location>
        <begin position="1"/>
        <end position="291"/>
    </location>
</feature>
<feature type="transmembrane region" description="Helical" evidence="1">
    <location>
        <begin position="22"/>
        <end position="42"/>
    </location>
</feature>
<feature type="transmembrane region" description="Helical" evidence="1">
    <location>
        <begin position="85"/>
        <end position="105"/>
    </location>
</feature>
<feature type="transmembrane region" description="Helical" evidence="1">
    <location>
        <begin position="116"/>
        <end position="136"/>
    </location>
</feature>
<feature type="transmembrane region" description="Helical" evidence="1">
    <location>
        <begin position="142"/>
        <end position="162"/>
    </location>
</feature>
<feature type="transmembrane region" description="Helical" evidence="1">
    <location>
        <begin position="209"/>
        <end position="229"/>
    </location>
</feature>
<feature type="transmembrane region" description="Helical" evidence="1">
    <location>
        <begin position="247"/>
        <end position="267"/>
    </location>
</feature>
<feature type="domain" description="ABC transmembrane type-1" evidence="2">
    <location>
        <begin position="81"/>
        <end position="272"/>
    </location>
</feature>
<feature type="helix" evidence="15">
    <location>
        <begin position="7"/>
        <end position="15"/>
    </location>
</feature>
<feature type="helix" evidence="15">
    <location>
        <begin position="19"/>
        <end position="37"/>
    </location>
</feature>
<feature type="turn" evidence="15">
    <location>
        <begin position="39"/>
        <end position="41"/>
    </location>
</feature>
<feature type="strand" evidence="15">
    <location>
        <begin position="42"/>
        <end position="44"/>
    </location>
</feature>
<feature type="strand" evidence="15">
    <location>
        <begin position="60"/>
        <end position="62"/>
    </location>
</feature>
<feature type="strand" evidence="13">
    <location>
        <begin position="70"/>
        <end position="72"/>
    </location>
</feature>
<feature type="helix" evidence="15">
    <location>
        <begin position="73"/>
        <end position="109"/>
    </location>
</feature>
<feature type="helix" evidence="15">
    <location>
        <begin position="112"/>
        <end position="126"/>
    </location>
</feature>
<feature type="helix" evidence="15">
    <location>
        <begin position="129"/>
        <end position="136"/>
    </location>
</feature>
<feature type="strand" evidence="15">
    <location>
        <begin position="137"/>
        <end position="139"/>
    </location>
</feature>
<feature type="helix" evidence="15">
    <location>
        <begin position="143"/>
        <end position="155"/>
    </location>
</feature>
<feature type="helix" evidence="15">
    <location>
        <begin position="159"/>
        <end position="172"/>
    </location>
</feature>
<feature type="helix" evidence="15">
    <location>
        <begin position="176"/>
        <end position="183"/>
    </location>
</feature>
<feature type="helix" evidence="15">
    <location>
        <begin position="188"/>
        <end position="224"/>
    </location>
</feature>
<feature type="strand" evidence="13">
    <location>
        <begin position="227"/>
        <end position="229"/>
    </location>
</feature>
<feature type="strand" evidence="14">
    <location>
        <begin position="231"/>
        <end position="233"/>
    </location>
</feature>
<feature type="helix" evidence="15">
    <location>
        <begin position="236"/>
        <end position="243"/>
    </location>
</feature>
<feature type="helix" evidence="15">
    <location>
        <begin position="245"/>
        <end position="247"/>
    </location>
</feature>
<feature type="helix" evidence="15">
    <location>
        <begin position="251"/>
        <end position="279"/>
    </location>
</feature>
<dbReference type="EMBL" id="AL123456">
    <property type="protein sequence ID" value="CCP44038.1"/>
    <property type="molecule type" value="Genomic_DNA"/>
</dbReference>
<dbReference type="PIR" id="D70729">
    <property type="entry name" value="D70729"/>
</dbReference>
<dbReference type="RefSeq" id="NP_215798.1">
    <property type="nucleotide sequence ID" value="NC_000962.3"/>
</dbReference>
<dbReference type="RefSeq" id="WP_003406607.1">
    <property type="nucleotide sequence ID" value="NZ_NVQJ01000030.1"/>
</dbReference>
<dbReference type="PDB" id="8J5Q">
    <property type="method" value="EM"/>
    <property type="resolution" value="3.25 A"/>
    <property type="chains" value="C=1-291"/>
</dbReference>
<dbReference type="PDB" id="8J5R">
    <property type="method" value="EM"/>
    <property type="resolution" value="3.28 A"/>
    <property type="chains" value="C=1-291"/>
</dbReference>
<dbReference type="PDB" id="8J5S">
    <property type="method" value="EM"/>
    <property type="resolution" value="3.00 A"/>
    <property type="chains" value="C=1-291"/>
</dbReference>
<dbReference type="PDB" id="8J5T">
    <property type="method" value="EM"/>
    <property type="resolution" value="2.98 A"/>
    <property type="chains" value="C=1-291"/>
</dbReference>
<dbReference type="PDBsum" id="8J5Q"/>
<dbReference type="PDBsum" id="8J5R"/>
<dbReference type="PDBsum" id="8J5S"/>
<dbReference type="PDBsum" id="8J5T"/>
<dbReference type="EMDB" id="EMD-35990"/>
<dbReference type="EMDB" id="EMD-35991"/>
<dbReference type="EMDB" id="EMD-35992"/>
<dbReference type="EMDB" id="EMD-35993"/>
<dbReference type="SMR" id="P9WFZ9"/>
<dbReference type="FunCoup" id="P9WFZ9">
    <property type="interactions" value="88"/>
</dbReference>
<dbReference type="STRING" id="83332.Rv1282c"/>
<dbReference type="TCDB" id="3.A.1.5.50">
    <property type="family name" value="the atp-binding cassette (abc) superfamily"/>
</dbReference>
<dbReference type="PaxDb" id="83332-Rv1282c"/>
<dbReference type="DNASU" id="886980"/>
<dbReference type="GeneID" id="886980"/>
<dbReference type="KEGG" id="mtu:Rv1282c"/>
<dbReference type="KEGG" id="mtv:RVBD_1282c"/>
<dbReference type="TubercuList" id="Rv1282c"/>
<dbReference type="eggNOG" id="COG1173">
    <property type="taxonomic scope" value="Bacteria"/>
</dbReference>
<dbReference type="InParanoid" id="P9WFZ9"/>
<dbReference type="OrthoDB" id="9812701at2"/>
<dbReference type="PhylomeDB" id="P9WFZ9"/>
<dbReference type="Reactome" id="R-HSA-1222538">
    <property type="pathway name" value="Tolerance by Mtb to nitric oxide produced by macrophages"/>
</dbReference>
<dbReference type="Proteomes" id="UP000001584">
    <property type="component" value="Chromosome"/>
</dbReference>
<dbReference type="GO" id="GO:0005886">
    <property type="term" value="C:plasma membrane"/>
    <property type="evidence" value="ECO:0000318"/>
    <property type="project" value="GO_Central"/>
</dbReference>
<dbReference type="GO" id="GO:0015640">
    <property type="term" value="F:peptidoglycan peptide transmembrane transporter activity"/>
    <property type="evidence" value="ECO:0000318"/>
    <property type="project" value="GO_Central"/>
</dbReference>
<dbReference type="GO" id="GO:0015031">
    <property type="term" value="P:protein transport"/>
    <property type="evidence" value="ECO:0007669"/>
    <property type="project" value="UniProtKB-KW"/>
</dbReference>
<dbReference type="CDD" id="cd06261">
    <property type="entry name" value="TM_PBP2"/>
    <property type="match status" value="1"/>
</dbReference>
<dbReference type="FunFam" id="1.10.3720.10:FF:000102">
    <property type="entry name" value="Oligopeptide ABC transporter permease OppC"/>
    <property type="match status" value="1"/>
</dbReference>
<dbReference type="Gene3D" id="1.10.3720.10">
    <property type="entry name" value="MetI-like"/>
    <property type="match status" value="1"/>
</dbReference>
<dbReference type="InterPro" id="IPR050366">
    <property type="entry name" value="BP-dependent_transpt_permease"/>
</dbReference>
<dbReference type="InterPro" id="IPR000515">
    <property type="entry name" value="MetI-like"/>
</dbReference>
<dbReference type="InterPro" id="IPR035906">
    <property type="entry name" value="MetI-like_sf"/>
</dbReference>
<dbReference type="InterPro" id="IPR025966">
    <property type="entry name" value="OppC_N"/>
</dbReference>
<dbReference type="PANTHER" id="PTHR43386">
    <property type="entry name" value="OLIGOPEPTIDE TRANSPORT SYSTEM PERMEASE PROTEIN APPC"/>
    <property type="match status" value="1"/>
</dbReference>
<dbReference type="PANTHER" id="PTHR43386:SF2">
    <property type="entry name" value="OLIGOPEPTIDE TRANSPORT SYSTEM PERMEASE PROTEIN OPPC"/>
    <property type="match status" value="1"/>
</dbReference>
<dbReference type="Pfam" id="PF00528">
    <property type="entry name" value="BPD_transp_1"/>
    <property type="match status" value="1"/>
</dbReference>
<dbReference type="Pfam" id="PF12911">
    <property type="entry name" value="OppC_N"/>
    <property type="match status" value="1"/>
</dbReference>
<dbReference type="SUPFAM" id="SSF161098">
    <property type="entry name" value="MetI-like"/>
    <property type="match status" value="1"/>
</dbReference>
<dbReference type="PROSITE" id="PS50928">
    <property type="entry name" value="ABC_TM1"/>
    <property type="match status" value="1"/>
</dbReference>
<reference key="1">
    <citation type="journal article" date="1998" name="Nature">
        <title>Deciphering the biology of Mycobacterium tuberculosis from the complete genome sequence.</title>
        <authorList>
            <person name="Cole S.T."/>
            <person name="Brosch R."/>
            <person name="Parkhill J."/>
            <person name="Garnier T."/>
            <person name="Churcher C.M."/>
            <person name="Harris D.E."/>
            <person name="Gordon S.V."/>
            <person name="Eiglmeier K."/>
            <person name="Gas S."/>
            <person name="Barry C.E. III"/>
            <person name="Tekaia F."/>
            <person name="Badcock K."/>
            <person name="Basham D."/>
            <person name="Brown D."/>
            <person name="Chillingworth T."/>
            <person name="Connor R."/>
            <person name="Davies R.M."/>
            <person name="Devlin K."/>
            <person name="Feltwell T."/>
            <person name="Gentles S."/>
            <person name="Hamlin N."/>
            <person name="Holroyd S."/>
            <person name="Hornsby T."/>
            <person name="Jagels K."/>
            <person name="Krogh A."/>
            <person name="McLean J."/>
            <person name="Moule S."/>
            <person name="Murphy L.D."/>
            <person name="Oliver S."/>
            <person name="Osborne J."/>
            <person name="Quail M.A."/>
            <person name="Rajandream M.A."/>
            <person name="Rogers J."/>
            <person name="Rutter S."/>
            <person name="Seeger K."/>
            <person name="Skelton S."/>
            <person name="Squares S."/>
            <person name="Squares R."/>
            <person name="Sulston J.E."/>
            <person name="Taylor K."/>
            <person name="Whitehead S."/>
            <person name="Barrell B.G."/>
        </authorList>
    </citation>
    <scope>NUCLEOTIDE SEQUENCE [LARGE SCALE GENOMIC DNA]</scope>
    <source>
        <strain>ATCC 25618 / H37Rv</strain>
    </source>
</reference>
<reference key="2">
    <citation type="journal article" date="2010" name="PLoS ONE">
        <title>An oligopeptide transporter of Mycobacterium tuberculosis regulates cytokine release and apoptosis of infected macrophages.</title>
        <authorList>
            <person name="Dasgupta A."/>
            <person name="Sureka K."/>
            <person name="Mitra D."/>
            <person name="Saha B."/>
            <person name="Sanyal S."/>
            <person name="Das A.K."/>
            <person name="Chakrabarti P."/>
            <person name="Jackson M."/>
            <person name="Gicquel B."/>
            <person name="Kundu M."/>
            <person name="Basu J."/>
        </authorList>
    </citation>
    <scope>FUNCTION</scope>
    <source>
        <strain>H37Rv</strain>
    </source>
</reference>
<reference key="3">
    <citation type="journal article" date="2011" name="Mol. Cell. Proteomics">
        <title>Proteogenomic analysis of Mycobacterium tuberculosis by high resolution mass spectrometry.</title>
        <authorList>
            <person name="Kelkar D.S."/>
            <person name="Kumar D."/>
            <person name="Kumar P."/>
            <person name="Balakrishnan L."/>
            <person name="Muthusamy B."/>
            <person name="Yadav A.K."/>
            <person name="Shrivastava P."/>
            <person name="Marimuthu A."/>
            <person name="Anand S."/>
            <person name="Sundaram H."/>
            <person name="Kingsbury R."/>
            <person name="Harsha H.C."/>
            <person name="Nair B."/>
            <person name="Prasad T.S."/>
            <person name="Chauhan D.S."/>
            <person name="Katoch K."/>
            <person name="Katoch V.M."/>
            <person name="Kumar P."/>
            <person name="Chaerkady R."/>
            <person name="Ramachandran S."/>
            <person name="Dash D."/>
            <person name="Pandey A."/>
        </authorList>
    </citation>
    <scope>IDENTIFICATION BY MASS SPECTROMETRY [LARGE SCALE ANALYSIS]</scope>
    <source>
        <strain>ATCC 25618 / H37Rv</strain>
    </source>
</reference>
<reference evidence="9 10 11 12" key="4">
    <citation type="journal article" date="2024" name="Nat. Struct. Mol. Biol.">
        <title>An oligopeptide permease, OppABCD, requires an iron-sulfur cluster domain for functionality.</title>
        <authorList>
            <person name="Yang X."/>
            <person name="Hu T."/>
            <person name="Liang J."/>
            <person name="Xiong Z."/>
            <person name="Lin Z."/>
            <person name="Zhao Y."/>
            <person name="Zhou X."/>
            <person name="Gao Y."/>
            <person name="Sun S."/>
            <person name="Yang X."/>
            <person name="Guddat L.W."/>
            <person name="Yang H."/>
            <person name="Rao Z."/>
            <person name="Zhang B."/>
        </authorList>
    </citation>
    <scope>STRUCTURE BY ELECTRON MICROSCOPY (2.98 ANGSTROMS) IN COMPLEXES WITH OPPA; OPPB AND OPPD</scope>
    <scope>FUNCTION</scope>
    <scope>SUBUNIT</scope>
    <scope>SUBCELLULAR LOCATION</scope>
    <source>
        <strain>H37Rv</strain>
    </source>
</reference>
<comment type="function">
    <text evidence="3 4">Part of the ABC transporter complex OppABCD involved in the uptake of oligopeptides (PubMed:20808924, PubMed:38548954). Responsible for the translocation of the substrate across the membrane (PubMed:38548954). Glutathione (GSH) uptake by mycobacteria through the OppABCD system contributes to the depletion of the GSH pool in infected macrophages, which impairs the ability of the macrophage to detoxify methylglyoxal (MG) and contributes to enhanced production of inflammatory cytokines (PubMed:20808924).</text>
</comment>
<comment type="subunit">
    <text evidence="4 7">The complex is composed of an ATP-binding protein (OppD), two transmembrane proteins (OppB and OppC) and a solute-binding protein (OppA).</text>
</comment>
<comment type="subcellular location">
    <subcellularLocation>
        <location evidence="4">Cell inner membrane</location>
        <topology evidence="4">Multi-pass membrane protein</topology>
    </subcellularLocation>
</comment>
<comment type="similarity">
    <text evidence="6">Belongs to the binding-protein-dependent transport system permease family. OppBC subfamily.</text>
</comment>